<reference key="1">
    <citation type="journal article" date="2001" name="Nat. Neurosci.">
        <title>Two new classes of conopeptides inhibit the alpha1-adrenoceptor and noradrenaline transporter.</title>
        <authorList>
            <person name="Sharpe I.A."/>
            <person name="Gehrmann J."/>
            <person name="Loughnan M.L."/>
            <person name="Thomas L."/>
            <person name="Adams D.A."/>
            <person name="Atkins A."/>
            <person name="Palant E."/>
            <person name="Craik D.J."/>
            <person name="Adams D.J."/>
            <person name="Alewood P.F."/>
            <person name="Lewis R.J."/>
        </authorList>
    </citation>
    <scope>PROTEIN SEQUENCE</scope>
    <scope>SYNTHESIS</scope>
    <scope>FUNCTION</scope>
    <scope>HYDROXYLATION AT PRO-12</scope>
    <scope>DISULFIDE BONDS</scope>
    <scope>STRUCTURE BY NMR</scope>
    <scope>MASS SPECTROMETRY</scope>
    <scope>SUBCELLULAR LOCATION</scope>
    <source>
        <tissue>Venom</tissue>
    </source>
</reference>
<sequence>VGVCCGYKLCHPC</sequence>
<accession>P58810</accession>
<keyword id="KW-0002">3D-structure</keyword>
<keyword id="KW-0903">Direct protein sequencing</keyword>
<keyword id="KW-1015">Disulfide bond</keyword>
<keyword id="KW-0379">Hydroxylation</keyword>
<keyword id="KW-0528">Neurotoxin</keyword>
<keyword id="KW-0964">Secreted</keyword>
<keyword id="KW-0800">Toxin</keyword>
<proteinExistence type="evidence at protein level"/>
<name>CTA1B_CONMR</name>
<comment type="function">
    <text evidence="1">Chi-conotoxins inhibit the neuronal noradrenaline transporter (NET/SLC6A2).</text>
</comment>
<comment type="subcellular location">
    <subcellularLocation>
        <location evidence="1">Secreted</location>
    </subcellularLocation>
</comment>
<comment type="tissue specificity">
    <text evidence="3">Expressed by the venom duct.</text>
</comment>
<comment type="domain">
    <text evidence="2">The cysteine framework is X (CC-CX[hydroxyPro]C).</text>
</comment>
<comment type="mass spectrometry"/>
<comment type="miscellaneous">
    <text>Exists in two forms, due to cis-trans isomerization at 11-His-Hyp-12.</text>
</comment>
<comment type="similarity">
    <text evidence="2">Belongs to the conotoxin T superfamily.</text>
</comment>
<protein>
    <recommendedName>
        <fullName>Chi-conotoxin MrIB</fullName>
    </recommendedName>
    <alternativeName>
        <fullName>Conotoxin MrIB</fullName>
    </alternativeName>
    <alternativeName>
        <fullName>Lambda/chi-conotoxin MrIB</fullName>
        <shortName>Chi-MrIB</shortName>
    </alternativeName>
</protein>
<dbReference type="PDB" id="1IEO">
    <property type="method" value="NMR"/>
    <property type="chains" value="A=1-13"/>
</dbReference>
<dbReference type="PDBsum" id="1IEO"/>
<dbReference type="SMR" id="P58810"/>
<dbReference type="ConoServer" id="1737">
    <property type="toxin name" value="MrIB"/>
</dbReference>
<dbReference type="EvolutionaryTrace" id="P58810"/>
<dbReference type="GO" id="GO:0005576">
    <property type="term" value="C:extracellular region"/>
    <property type="evidence" value="ECO:0007669"/>
    <property type="project" value="UniProtKB-SubCell"/>
</dbReference>
<dbReference type="GO" id="GO:0090729">
    <property type="term" value="F:toxin activity"/>
    <property type="evidence" value="ECO:0007669"/>
    <property type="project" value="UniProtKB-KW"/>
</dbReference>
<organism>
    <name type="scientific">Conus marmoreus</name>
    <name type="common">Marble cone</name>
    <dbReference type="NCBI Taxonomy" id="42752"/>
    <lineage>
        <taxon>Eukaryota</taxon>
        <taxon>Metazoa</taxon>
        <taxon>Spiralia</taxon>
        <taxon>Lophotrochozoa</taxon>
        <taxon>Mollusca</taxon>
        <taxon>Gastropoda</taxon>
        <taxon>Caenogastropoda</taxon>
        <taxon>Neogastropoda</taxon>
        <taxon>Conoidea</taxon>
        <taxon>Conidae</taxon>
        <taxon>Conus</taxon>
    </lineage>
</organism>
<evidence type="ECO:0000269" key="1">
    <source>
    </source>
</evidence>
<evidence type="ECO:0000305" key="2"/>
<evidence type="ECO:0000305" key="3">
    <source>
    </source>
</evidence>
<evidence type="ECO:0007829" key="4">
    <source>
        <dbReference type="PDB" id="1IEO"/>
    </source>
</evidence>
<feature type="peptide" id="PRO_0000044509" description="Chi-conotoxin MrIB">
    <location>
        <begin position="1"/>
        <end position="13"/>
    </location>
</feature>
<feature type="modified residue" description="4-hydroxyproline" evidence="1">
    <location>
        <position position="12"/>
    </location>
</feature>
<feature type="disulfide bond" evidence="1">
    <location>
        <begin position="4"/>
        <end position="13"/>
    </location>
</feature>
<feature type="disulfide bond" evidence="1">
    <location>
        <begin position="5"/>
        <end position="10"/>
    </location>
</feature>
<feature type="strand" evidence="4">
    <location>
        <begin position="6"/>
        <end position="8"/>
    </location>
</feature>